<dbReference type="EMBL" id="AP009351">
    <property type="protein sequence ID" value="BAF67542.1"/>
    <property type="molecule type" value="Genomic_DNA"/>
</dbReference>
<dbReference type="RefSeq" id="WP_000505015.1">
    <property type="nucleotide sequence ID" value="NZ_JBBIAE010000001.1"/>
</dbReference>
<dbReference type="SMR" id="A6QGR0"/>
<dbReference type="KEGG" id="sae:NWMN_1270"/>
<dbReference type="HOGENOM" id="CLU_078802_0_0_9"/>
<dbReference type="Proteomes" id="UP000006386">
    <property type="component" value="Chromosome"/>
</dbReference>
<dbReference type="GO" id="GO:0003723">
    <property type="term" value="F:RNA binding"/>
    <property type="evidence" value="ECO:0007669"/>
    <property type="project" value="InterPro"/>
</dbReference>
<dbReference type="GO" id="GO:0045893">
    <property type="term" value="P:positive regulation of DNA-templated transcription"/>
    <property type="evidence" value="ECO:0007669"/>
    <property type="project" value="InterPro"/>
</dbReference>
<dbReference type="Gene3D" id="1.20.58.1950">
    <property type="match status" value="1"/>
</dbReference>
<dbReference type="Gene3D" id="1.20.890.100">
    <property type="match status" value="1"/>
</dbReference>
<dbReference type="Gene3D" id="2.30.24.10">
    <property type="entry name" value="CAT RNA-binding domain"/>
    <property type="match status" value="1"/>
</dbReference>
<dbReference type="Gene3D" id="1.10.1790.10">
    <property type="entry name" value="PRD domain"/>
    <property type="match status" value="1"/>
</dbReference>
<dbReference type="InterPro" id="IPR050661">
    <property type="entry name" value="BglG_antiterminators"/>
</dbReference>
<dbReference type="InterPro" id="IPR004341">
    <property type="entry name" value="CAT_RNA-bd_dom"/>
</dbReference>
<dbReference type="InterPro" id="IPR036650">
    <property type="entry name" value="CAT_RNA-bd_dom_sf"/>
</dbReference>
<dbReference type="InterPro" id="IPR011608">
    <property type="entry name" value="PRD"/>
</dbReference>
<dbReference type="InterPro" id="IPR036634">
    <property type="entry name" value="PRD_sf"/>
</dbReference>
<dbReference type="InterPro" id="IPR001550">
    <property type="entry name" value="Transcrpt_antitermin_CS"/>
</dbReference>
<dbReference type="NCBIfam" id="NF047357">
    <property type="entry name" value="antiterm_GlcT"/>
    <property type="match status" value="1"/>
</dbReference>
<dbReference type="PANTHER" id="PTHR30185">
    <property type="entry name" value="CRYPTIC BETA-GLUCOSIDE BGL OPERON ANTITERMINATOR"/>
    <property type="match status" value="1"/>
</dbReference>
<dbReference type="PANTHER" id="PTHR30185:SF16">
    <property type="entry name" value="PROTEIN GLCT"/>
    <property type="match status" value="1"/>
</dbReference>
<dbReference type="Pfam" id="PF03123">
    <property type="entry name" value="CAT_RBD"/>
    <property type="match status" value="1"/>
</dbReference>
<dbReference type="Pfam" id="PF00874">
    <property type="entry name" value="PRD"/>
    <property type="match status" value="2"/>
</dbReference>
<dbReference type="SMART" id="SM01061">
    <property type="entry name" value="CAT_RBD"/>
    <property type="match status" value="1"/>
</dbReference>
<dbReference type="SUPFAM" id="SSF63520">
    <property type="entry name" value="PTS-regulatory domain, PRD"/>
    <property type="match status" value="2"/>
</dbReference>
<dbReference type="SUPFAM" id="SSF50151">
    <property type="entry name" value="SacY-like RNA-binding domain"/>
    <property type="match status" value="1"/>
</dbReference>
<dbReference type="PROSITE" id="PS00654">
    <property type="entry name" value="PRD_1"/>
    <property type="match status" value="1"/>
</dbReference>
<dbReference type="PROSITE" id="PS51372">
    <property type="entry name" value="PRD_2"/>
    <property type="match status" value="2"/>
</dbReference>
<keyword id="KW-0677">Repeat</keyword>
<gene>
    <name type="primary">glcT</name>
    <name type="ordered locus">NWMN_1270</name>
</gene>
<accession>A6QGR0</accession>
<protein>
    <recommendedName>
        <fullName>Protein GlcT</fullName>
    </recommendedName>
</protein>
<organism>
    <name type="scientific">Staphylococcus aureus (strain Newman)</name>
    <dbReference type="NCBI Taxonomy" id="426430"/>
    <lineage>
        <taxon>Bacteria</taxon>
        <taxon>Bacillati</taxon>
        <taxon>Bacillota</taxon>
        <taxon>Bacilli</taxon>
        <taxon>Bacillales</taxon>
        <taxon>Staphylococcaceae</taxon>
        <taxon>Staphylococcus</taxon>
    </lineage>
</organism>
<feature type="chain" id="PRO_0000352607" description="Protein GlcT">
    <location>
        <begin position="1"/>
        <end position="283"/>
    </location>
</feature>
<feature type="domain" description="PRD 1" evidence="1">
    <location>
        <begin position="69"/>
        <end position="173"/>
    </location>
</feature>
<feature type="domain" description="PRD 2" evidence="1">
    <location>
        <begin position="174"/>
        <end position="283"/>
    </location>
</feature>
<evidence type="ECO:0000255" key="1">
    <source>
        <dbReference type="PROSITE-ProRule" id="PRU00704"/>
    </source>
</evidence>
<evidence type="ECO:0000305" key="2"/>
<reference key="1">
    <citation type="journal article" date="2008" name="J. Bacteriol.">
        <title>Genome sequence of Staphylococcus aureus strain Newman and comparative analysis of staphylococcal genomes: polymorphism and evolution of two major pathogenicity islands.</title>
        <authorList>
            <person name="Baba T."/>
            <person name="Bae T."/>
            <person name="Schneewind O."/>
            <person name="Takeuchi F."/>
            <person name="Hiramatsu K."/>
        </authorList>
    </citation>
    <scope>NUCLEOTIDE SEQUENCE [LARGE SCALE GENOMIC DNA]</scope>
    <source>
        <strain>Newman</strain>
    </source>
</reference>
<proteinExistence type="inferred from homology"/>
<sequence length="283" mass="32823">MGEYIVTKTLNNNVVVCTNNDQEVILIGKGIGFNKKEGMALNDQTITIEKIYKLESEQQKAHYKSLVEIADDNVLQVIIDSLNFISNTAMNVDSKQLVVSLTDHIIFAYKRLKQNQVISNPFVMETMQLYSDAYHIAKQVIDQLNAALDVHFPEDEIGFIALHIASNTEDLSMHEMTLINNVIKKGIDIIESDLVTTVDKESLQYQRFIRHVQFLIRRLRRKEYIHAQDDFVSMIKNHYPICYNTAYKILTMIQKQFDVNISESEIIYLTLHIHHFEERINQS</sequence>
<name>GLCT_STAAE</name>
<comment type="similarity">
    <text evidence="2">Belongs to the transcriptional antiterminator BglG family. GlcT subfamily.</text>
</comment>